<protein>
    <recommendedName>
        <fullName evidence="2">D-alanine--D-alanine ligase</fullName>
        <ecNumber evidence="2">6.3.2.4</ecNumber>
    </recommendedName>
    <alternativeName>
        <fullName evidence="2">D-Ala-D-Ala ligase</fullName>
    </alternativeName>
    <alternativeName>
        <fullName evidence="2">D-alanylalanine synthetase</fullName>
    </alternativeName>
</protein>
<gene>
    <name evidence="2" type="primary">ddl</name>
    <name type="ordered locus">CLI_0538</name>
</gene>
<sequence>MKIGIIMGGISTEREVSLNSGREVIKYLELLEHEIIPIIIDKKEDVMEKAKGIDFAFLALHGEFGEDGTVQSVLQTLDIPYSGCGPLTSAICMDKDMTKKILKYANINTADWVNVSSVENIDYEAIEKIGYPVFVKPNSGGSSVATNLVKDKEGIKEAVELALKYDKEVMIENYTKGEEITCCMLNGKMLPVLAIRPHAEFFDYTAKYADGGSDEVVIELEENLHKKVEEMALACWKELKCEVYVRVDMIVKDGIPYVLELNTLPGMTKNSLFPKSANAVGISFAELLNSIVKYSLEVER</sequence>
<reference key="1">
    <citation type="submission" date="2007-06" db="EMBL/GenBank/DDBJ databases">
        <authorList>
            <person name="Brinkac L.M."/>
            <person name="Daugherty S."/>
            <person name="Dodson R.J."/>
            <person name="Madupu R."/>
            <person name="Brown J.L."/>
            <person name="Bruce D."/>
            <person name="Detter C."/>
            <person name="Munk C."/>
            <person name="Smith L.A."/>
            <person name="Smith T.J."/>
            <person name="White O."/>
            <person name="Brettin T.S."/>
        </authorList>
    </citation>
    <scope>NUCLEOTIDE SEQUENCE [LARGE SCALE GENOMIC DNA]</scope>
    <source>
        <strain>Langeland / NCTC 10281 / Type F</strain>
    </source>
</reference>
<organism>
    <name type="scientific">Clostridium botulinum (strain Langeland / NCTC 10281 / Type F)</name>
    <dbReference type="NCBI Taxonomy" id="441772"/>
    <lineage>
        <taxon>Bacteria</taxon>
        <taxon>Bacillati</taxon>
        <taxon>Bacillota</taxon>
        <taxon>Clostridia</taxon>
        <taxon>Eubacteriales</taxon>
        <taxon>Clostridiaceae</taxon>
        <taxon>Clostridium</taxon>
    </lineage>
</organism>
<comment type="function">
    <text evidence="2">Cell wall formation.</text>
</comment>
<comment type="catalytic activity">
    <reaction evidence="2">
        <text>2 D-alanine + ATP = D-alanyl-D-alanine + ADP + phosphate + H(+)</text>
        <dbReference type="Rhea" id="RHEA:11224"/>
        <dbReference type="ChEBI" id="CHEBI:15378"/>
        <dbReference type="ChEBI" id="CHEBI:30616"/>
        <dbReference type="ChEBI" id="CHEBI:43474"/>
        <dbReference type="ChEBI" id="CHEBI:57416"/>
        <dbReference type="ChEBI" id="CHEBI:57822"/>
        <dbReference type="ChEBI" id="CHEBI:456216"/>
        <dbReference type="EC" id="6.3.2.4"/>
    </reaction>
</comment>
<comment type="cofactor">
    <cofactor evidence="1">
        <name>Mg(2+)</name>
        <dbReference type="ChEBI" id="CHEBI:18420"/>
    </cofactor>
    <cofactor evidence="1">
        <name>Mn(2+)</name>
        <dbReference type="ChEBI" id="CHEBI:29035"/>
    </cofactor>
    <text evidence="1">Binds 2 magnesium or manganese ions per subunit.</text>
</comment>
<comment type="pathway">
    <text evidence="2">Cell wall biogenesis; peptidoglycan biosynthesis.</text>
</comment>
<comment type="subcellular location">
    <subcellularLocation>
        <location evidence="2">Cytoplasm</location>
    </subcellularLocation>
</comment>
<comment type="similarity">
    <text evidence="2">Belongs to the D-alanine--D-alanine ligase family.</text>
</comment>
<proteinExistence type="inferred from homology"/>
<feature type="chain" id="PRO_1000030440" description="D-alanine--D-alanine ligase">
    <location>
        <begin position="1"/>
        <end position="300"/>
    </location>
</feature>
<feature type="domain" description="ATP-grasp" evidence="2">
    <location>
        <begin position="99"/>
        <end position="293"/>
    </location>
</feature>
<feature type="binding site" evidence="2">
    <location>
        <begin position="126"/>
        <end position="181"/>
    </location>
    <ligand>
        <name>ATP</name>
        <dbReference type="ChEBI" id="CHEBI:30616"/>
    </ligand>
</feature>
<feature type="binding site" evidence="2">
    <location>
        <position position="248"/>
    </location>
    <ligand>
        <name>Mg(2+)</name>
        <dbReference type="ChEBI" id="CHEBI:18420"/>
        <label>1</label>
    </ligand>
</feature>
<feature type="binding site" evidence="2">
    <location>
        <position position="260"/>
    </location>
    <ligand>
        <name>Mg(2+)</name>
        <dbReference type="ChEBI" id="CHEBI:18420"/>
        <label>1</label>
    </ligand>
</feature>
<feature type="binding site" evidence="2">
    <location>
        <position position="260"/>
    </location>
    <ligand>
        <name>Mg(2+)</name>
        <dbReference type="ChEBI" id="CHEBI:18420"/>
        <label>2</label>
    </ligand>
</feature>
<feature type="binding site" evidence="2">
    <location>
        <position position="262"/>
    </location>
    <ligand>
        <name>Mg(2+)</name>
        <dbReference type="ChEBI" id="CHEBI:18420"/>
        <label>2</label>
    </ligand>
</feature>
<keyword id="KW-0067">ATP-binding</keyword>
<keyword id="KW-0133">Cell shape</keyword>
<keyword id="KW-0961">Cell wall biogenesis/degradation</keyword>
<keyword id="KW-0963">Cytoplasm</keyword>
<keyword id="KW-0436">Ligase</keyword>
<keyword id="KW-0460">Magnesium</keyword>
<keyword id="KW-0464">Manganese</keyword>
<keyword id="KW-0479">Metal-binding</keyword>
<keyword id="KW-0547">Nucleotide-binding</keyword>
<keyword id="KW-0573">Peptidoglycan synthesis</keyword>
<dbReference type="EC" id="6.3.2.4" evidence="2"/>
<dbReference type="EMBL" id="CP000728">
    <property type="protein sequence ID" value="ABS42604.1"/>
    <property type="molecule type" value="Genomic_DNA"/>
</dbReference>
<dbReference type="RefSeq" id="WP_011987463.1">
    <property type="nucleotide sequence ID" value="NC_009699.1"/>
</dbReference>
<dbReference type="SMR" id="A7GAL4"/>
<dbReference type="KEGG" id="cbf:CLI_0538"/>
<dbReference type="HOGENOM" id="CLU_039268_1_1_9"/>
<dbReference type="UniPathway" id="UPA00219"/>
<dbReference type="Proteomes" id="UP000002410">
    <property type="component" value="Chromosome"/>
</dbReference>
<dbReference type="GO" id="GO:0005737">
    <property type="term" value="C:cytoplasm"/>
    <property type="evidence" value="ECO:0007669"/>
    <property type="project" value="UniProtKB-SubCell"/>
</dbReference>
<dbReference type="GO" id="GO:0005524">
    <property type="term" value="F:ATP binding"/>
    <property type="evidence" value="ECO:0007669"/>
    <property type="project" value="UniProtKB-KW"/>
</dbReference>
<dbReference type="GO" id="GO:0008716">
    <property type="term" value="F:D-alanine-D-alanine ligase activity"/>
    <property type="evidence" value="ECO:0007669"/>
    <property type="project" value="UniProtKB-UniRule"/>
</dbReference>
<dbReference type="GO" id="GO:0046872">
    <property type="term" value="F:metal ion binding"/>
    <property type="evidence" value="ECO:0007669"/>
    <property type="project" value="UniProtKB-KW"/>
</dbReference>
<dbReference type="GO" id="GO:0071555">
    <property type="term" value="P:cell wall organization"/>
    <property type="evidence" value="ECO:0007669"/>
    <property type="project" value="UniProtKB-KW"/>
</dbReference>
<dbReference type="GO" id="GO:0009252">
    <property type="term" value="P:peptidoglycan biosynthetic process"/>
    <property type="evidence" value="ECO:0007669"/>
    <property type="project" value="UniProtKB-UniRule"/>
</dbReference>
<dbReference type="GO" id="GO:0008360">
    <property type="term" value="P:regulation of cell shape"/>
    <property type="evidence" value="ECO:0007669"/>
    <property type="project" value="UniProtKB-KW"/>
</dbReference>
<dbReference type="FunFam" id="3.30.1490.20:FF:000035">
    <property type="entry name" value="D-alanine--D-alanine ligase"/>
    <property type="match status" value="1"/>
</dbReference>
<dbReference type="FunFam" id="3.30.470.20:FF:000074">
    <property type="entry name" value="D-alanine--D-alanine ligase"/>
    <property type="match status" value="1"/>
</dbReference>
<dbReference type="FunFam" id="3.40.50.20:FF:000031">
    <property type="entry name" value="D-alanine--D-alanine ligase"/>
    <property type="match status" value="1"/>
</dbReference>
<dbReference type="Gene3D" id="3.40.50.20">
    <property type="match status" value="1"/>
</dbReference>
<dbReference type="Gene3D" id="3.30.1490.20">
    <property type="entry name" value="ATP-grasp fold, A domain"/>
    <property type="match status" value="1"/>
</dbReference>
<dbReference type="Gene3D" id="3.30.470.20">
    <property type="entry name" value="ATP-grasp fold, B domain"/>
    <property type="match status" value="1"/>
</dbReference>
<dbReference type="HAMAP" id="MF_00047">
    <property type="entry name" value="Dala_Dala_lig"/>
    <property type="match status" value="1"/>
</dbReference>
<dbReference type="InterPro" id="IPR011761">
    <property type="entry name" value="ATP-grasp"/>
</dbReference>
<dbReference type="InterPro" id="IPR013815">
    <property type="entry name" value="ATP_grasp_subdomain_1"/>
</dbReference>
<dbReference type="InterPro" id="IPR000291">
    <property type="entry name" value="D-Ala_lig_Van_CS"/>
</dbReference>
<dbReference type="InterPro" id="IPR005905">
    <property type="entry name" value="D_ala_D_ala"/>
</dbReference>
<dbReference type="InterPro" id="IPR011095">
    <property type="entry name" value="Dala_Dala_lig_C"/>
</dbReference>
<dbReference type="InterPro" id="IPR011127">
    <property type="entry name" value="Dala_Dala_lig_N"/>
</dbReference>
<dbReference type="InterPro" id="IPR016185">
    <property type="entry name" value="PreATP-grasp_dom_sf"/>
</dbReference>
<dbReference type="NCBIfam" id="TIGR01205">
    <property type="entry name" value="D_ala_D_alaTIGR"/>
    <property type="match status" value="1"/>
</dbReference>
<dbReference type="NCBIfam" id="NF002378">
    <property type="entry name" value="PRK01372.1"/>
    <property type="match status" value="1"/>
</dbReference>
<dbReference type="PANTHER" id="PTHR23132">
    <property type="entry name" value="D-ALANINE--D-ALANINE LIGASE"/>
    <property type="match status" value="1"/>
</dbReference>
<dbReference type="PANTHER" id="PTHR23132:SF23">
    <property type="entry name" value="D-ALANINE--D-ALANINE LIGASE B"/>
    <property type="match status" value="1"/>
</dbReference>
<dbReference type="Pfam" id="PF07478">
    <property type="entry name" value="Dala_Dala_lig_C"/>
    <property type="match status" value="1"/>
</dbReference>
<dbReference type="Pfam" id="PF01820">
    <property type="entry name" value="Dala_Dala_lig_N"/>
    <property type="match status" value="1"/>
</dbReference>
<dbReference type="PIRSF" id="PIRSF039102">
    <property type="entry name" value="Ddl/VanB"/>
    <property type="match status" value="1"/>
</dbReference>
<dbReference type="SMART" id="SM01209">
    <property type="entry name" value="GARS_A"/>
    <property type="match status" value="1"/>
</dbReference>
<dbReference type="SUPFAM" id="SSF56059">
    <property type="entry name" value="Glutathione synthetase ATP-binding domain-like"/>
    <property type="match status" value="1"/>
</dbReference>
<dbReference type="SUPFAM" id="SSF52440">
    <property type="entry name" value="PreATP-grasp domain"/>
    <property type="match status" value="1"/>
</dbReference>
<dbReference type="PROSITE" id="PS50975">
    <property type="entry name" value="ATP_GRASP"/>
    <property type="match status" value="1"/>
</dbReference>
<dbReference type="PROSITE" id="PS00843">
    <property type="entry name" value="DALA_DALA_LIGASE_1"/>
    <property type="match status" value="1"/>
</dbReference>
<dbReference type="PROSITE" id="PS00844">
    <property type="entry name" value="DALA_DALA_LIGASE_2"/>
    <property type="match status" value="1"/>
</dbReference>
<evidence type="ECO:0000250" key="1"/>
<evidence type="ECO:0000255" key="2">
    <source>
        <dbReference type="HAMAP-Rule" id="MF_00047"/>
    </source>
</evidence>
<accession>A7GAL4</accession>
<name>DDL_CLOBL</name>